<feature type="chain" id="PRO_0000068734" description="Putative colanic acid biosynthesis acetyltransferase WcaB">
    <location>
        <begin position="1"/>
        <end position="162"/>
    </location>
</feature>
<sequence length="162" mass="17616">MLEDLRANSWSLRPCCMVLAYRVAHFCSVWRKKNVLNNLWAAPLLVLYRIITECFFGYEIQAAATIGRRFTIHHGYAVVINKNVVAGDDFTIRHGVTIGNRGADNMACPHIGNGVELGANVIILGDITLGNNVTVGAGSVVLDSVPDNALVVGEKARVKVIK</sequence>
<protein>
    <recommendedName>
        <fullName>Putative colanic acid biosynthesis acetyltransferase WcaB</fullName>
        <ecNumber>2.3.1.-</ecNumber>
    </recommendedName>
</protein>
<evidence type="ECO:0000305" key="1"/>
<proteinExistence type="inferred from homology"/>
<reference key="1">
    <citation type="journal article" date="2001" name="Nature">
        <title>Genome sequence of enterohaemorrhagic Escherichia coli O157:H7.</title>
        <authorList>
            <person name="Perna N.T."/>
            <person name="Plunkett G. III"/>
            <person name="Burland V."/>
            <person name="Mau B."/>
            <person name="Glasner J.D."/>
            <person name="Rose D.J."/>
            <person name="Mayhew G.F."/>
            <person name="Evans P.S."/>
            <person name="Gregor J."/>
            <person name="Kirkpatrick H.A."/>
            <person name="Posfai G."/>
            <person name="Hackett J."/>
            <person name="Klink S."/>
            <person name="Boutin A."/>
            <person name="Shao Y."/>
            <person name="Miller L."/>
            <person name="Grotbeck E.J."/>
            <person name="Davis N.W."/>
            <person name="Lim A."/>
            <person name="Dimalanta E.T."/>
            <person name="Potamousis K."/>
            <person name="Apodaca J."/>
            <person name="Anantharaman T.S."/>
            <person name="Lin J."/>
            <person name="Yen G."/>
            <person name="Schwartz D.C."/>
            <person name="Welch R.A."/>
            <person name="Blattner F.R."/>
        </authorList>
    </citation>
    <scope>NUCLEOTIDE SEQUENCE [LARGE SCALE GENOMIC DNA]</scope>
    <source>
        <strain>O157:H7 / EDL933 / ATCC 700927 / EHEC</strain>
    </source>
</reference>
<reference key="2">
    <citation type="journal article" date="2001" name="DNA Res.">
        <title>Complete genome sequence of enterohemorrhagic Escherichia coli O157:H7 and genomic comparison with a laboratory strain K-12.</title>
        <authorList>
            <person name="Hayashi T."/>
            <person name="Makino K."/>
            <person name="Ohnishi M."/>
            <person name="Kurokawa K."/>
            <person name="Ishii K."/>
            <person name="Yokoyama K."/>
            <person name="Han C.-G."/>
            <person name="Ohtsubo E."/>
            <person name="Nakayama K."/>
            <person name="Murata T."/>
            <person name="Tanaka M."/>
            <person name="Tobe T."/>
            <person name="Iida T."/>
            <person name="Takami H."/>
            <person name="Honda T."/>
            <person name="Sasakawa C."/>
            <person name="Ogasawara N."/>
            <person name="Yasunaga T."/>
            <person name="Kuhara S."/>
            <person name="Shiba T."/>
            <person name="Hattori M."/>
            <person name="Shinagawa H."/>
        </authorList>
    </citation>
    <scope>NUCLEOTIDE SEQUENCE [LARGE SCALE GENOMIC DNA]</scope>
    <source>
        <strain>O157:H7 / Sakai / RIMD 0509952 / EHEC</strain>
    </source>
</reference>
<comment type="pathway">
    <text>Slime biogenesis; slime polysaccharide biosynthesis.</text>
</comment>
<comment type="similarity">
    <text evidence="1">Belongs to the transferase hexapeptide repeat family.</text>
</comment>
<organism>
    <name type="scientific">Escherichia coli O157:H7</name>
    <dbReference type="NCBI Taxonomy" id="83334"/>
    <lineage>
        <taxon>Bacteria</taxon>
        <taxon>Pseudomonadati</taxon>
        <taxon>Pseudomonadota</taxon>
        <taxon>Gammaproteobacteria</taxon>
        <taxon>Enterobacterales</taxon>
        <taxon>Enterobacteriaceae</taxon>
        <taxon>Escherichia</taxon>
    </lineage>
</organism>
<accession>P0ACD0</accession>
<accession>P77558</accession>
<name>WCAB_ECO57</name>
<keyword id="KW-0012">Acyltransferase</keyword>
<keyword id="KW-0448">Lipopolysaccharide biosynthesis</keyword>
<keyword id="KW-1185">Reference proteome</keyword>
<keyword id="KW-0677">Repeat</keyword>
<keyword id="KW-0808">Transferase</keyword>
<dbReference type="EC" id="2.3.1.-"/>
<dbReference type="EMBL" id="AE005174">
    <property type="protein sequence ID" value="AAG57118.1"/>
    <property type="molecule type" value="Genomic_DNA"/>
</dbReference>
<dbReference type="EMBL" id="BA000007">
    <property type="protein sequence ID" value="BAB36286.1"/>
    <property type="molecule type" value="Genomic_DNA"/>
</dbReference>
<dbReference type="PIR" id="B85832">
    <property type="entry name" value="B85832"/>
</dbReference>
<dbReference type="PIR" id="G90986">
    <property type="entry name" value="G90986"/>
</dbReference>
<dbReference type="RefSeq" id="NP_310890.1">
    <property type="nucleotide sequence ID" value="NC_002695.1"/>
</dbReference>
<dbReference type="RefSeq" id="WP_000888740.1">
    <property type="nucleotide sequence ID" value="NZ_VOAI01000013.1"/>
</dbReference>
<dbReference type="SMR" id="P0ACD0"/>
<dbReference type="STRING" id="155864.Z3222"/>
<dbReference type="GeneID" id="912644"/>
<dbReference type="GeneID" id="93775133"/>
<dbReference type="KEGG" id="ece:Z3222"/>
<dbReference type="KEGG" id="ecs:ECs_2863"/>
<dbReference type="PATRIC" id="fig|386585.9.peg.2996"/>
<dbReference type="eggNOG" id="COG1045">
    <property type="taxonomic scope" value="Bacteria"/>
</dbReference>
<dbReference type="HOGENOM" id="CLU_051638_10_2_6"/>
<dbReference type="OMA" id="WLMGIEI"/>
<dbReference type="UniPathway" id="UPA00936"/>
<dbReference type="Proteomes" id="UP000000558">
    <property type="component" value="Chromosome"/>
</dbReference>
<dbReference type="Proteomes" id="UP000002519">
    <property type="component" value="Chromosome"/>
</dbReference>
<dbReference type="GO" id="GO:0005737">
    <property type="term" value="C:cytoplasm"/>
    <property type="evidence" value="ECO:0007669"/>
    <property type="project" value="InterPro"/>
</dbReference>
<dbReference type="GO" id="GO:0009001">
    <property type="term" value="F:serine O-acetyltransferase activity"/>
    <property type="evidence" value="ECO:0007669"/>
    <property type="project" value="InterPro"/>
</dbReference>
<dbReference type="GO" id="GO:0006535">
    <property type="term" value="P:cysteine biosynthetic process from serine"/>
    <property type="evidence" value="ECO:0007669"/>
    <property type="project" value="InterPro"/>
</dbReference>
<dbReference type="GO" id="GO:0009103">
    <property type="term" value="P:lipopolysaccharide biosynthetic process"/>
    <property type="evidence" value="ECO:0007669"/>
    <property type="project" value="UniProtKB-KW"/>
</dbReference>
<dbReference type="GO" id="GO:0045228">
    <property type="term" value="P:slime layer polysaccharide biosynthetic process"/>
    <property type="evidence" value="ECO:0007669"/>
    <property type="project" value="UniProtKB-UniPathway"/>
</dbReference>
<dbReference type="CDD" id="cd03354">
    <property type="entry name" value="LbH_SAT"/>
    <property type="match status" value="1"/>
</dbReference>
<dbReference type="FunFam" id="2.160.10.10:FF:000013">
    <property type="entry name" value="Acetyltransferase"/>
    <property type="match status" value="1"/>
</dbReference>
<dbReference type="Gene3D" id="2.160.10.10">
    <property type="entry name" value="Hexapeptide repeat proteins"/>
    <property type="match status" value="1"/>
</dbReference>
<dbReference type="InterPro" id="IPR024027">
    <property type="entry name" value="Colanic_acid_synth_WcaB"/>
</dbReference>
<dbReference type="InterPro" id="IPR001451">
    <property type="entry name" value="Hexapep"/>
</dbReference>
<dbReference type="InterPro" id="IPR018357">
    <property type="entry name" value="Hexapep_transf_CS"/>
</dbReference>
<dbReference type="InterPro" id="IPR045304">
    <property type="entry name" value="LbH_SAT"/>
</dbReference>
<dbReference type="InterPro" id="IPR005881">
    <property type="entry name" value="Ser_O-AcTrfase"/>
</dbReference>
<dbReference type="InterPro" id="IPR011004">
    <property type="entry name" value="Trimer_LpxA-like_sf"/>
</dbReference>
<dbReference type="NCBIfam" id="NF007564">
    <property type="entry name" value="PRK10191.1"/>
    <property type="match status" value="1"/>
</dbReference>
<dbReference type="NCBIfam" id="TIGR04016">
    <property type="entry name" value="WcaB"/>
    <property type="match status" value="1"/>
</dbReference>
<dbReference type="PANTHER" id="PTHR42811">
    <property type="entry name" value="SERINE ACETYLTRANSFERASE"/>
    <property type="match status" value="1"/>
</dbReference>
<dbReference type="Pfam" id="PF00132">
    <property type="entry name" value="Hexapep"/>
    <property type="match status" value="1"/>
</dbReference>
<dbReference type="PIRSF" id="PIRSF000441">
    <property type="entry name" value="CysE"/>
    <property type="match status" value="1"/>
</dbReference>
<dbReference type="SUPFAM" id="SSF51161">
    <property type="entry name" value="Trimeric LpxA-like enzymes"/>
    <property type="match status" value="1"/>
</dbReference>
<dbReference type="PROSITE" id="PS00101">
    <property type="entry name" value="HEXAPEP_TRANSFERASES"/>
    <property type="match status" value="1"/>
</dbReference>
<gene>
    <name type="primary">wcaB</name>
    <name type="ordered locus">Z3222</name>
    <name type="ordered locus">ECs2863</name>
</gene>